<sequence length="374" mass="41385">MVLWESPRQCSSWTLCEGFCWLLLLPVMLLIVARPVKLAAFPTSLSDCQTPTGWNCSGYDDRENDLFLCDTNTCKFDGECLRIGDTVTCVCQFKCNSDYVPVCGSNGESYQNECYLRQAACKQQSEILVVSEGSCATDAGSGSGDGVHEGSGETSQKETSTCDICQFGAECDEDAEDVWCVCNIDCSQTNFNPLCASDGKSYDNACQIKEASCQKQEKIEVMSLGRCQDNTTTTTKSEDGHYARTDFAENANKLEESAREHHIPCPEHYNGFCMHGKCEHSINMQEPSCRCDAGYTGQHCEKKDYSVLYVVPGPVRFQYVLIAAVIGTIQIAVICVVVLCITRKCPRSNRIHRQKQNTGHYSSDNTTRASTRLI</sequence>
<proteinExistence type="evidence at transcript level"/>
<protein>
    <recommendedName>
        <fullName>Tomoregulin-2</fullName>
        <shortName>TR-2</shortName>
    </recommendedName>
    <alternativeName>
        <fullName>Transmembrane protein with EGF-like and two follistatin-like domains</fullName>
    </alternativeName>
</protein>
<accession>Q17QD6</accession>
<reference key="1">
    <citation type="submission" date="2006-06" db="EMBL/GenBank/DDBJ databases">
        <authorList>
            <consortium name="NIH - Mammalian Gene Collection (MGC) project"/>
        </authorList>
    </citation>
    <scope>NUCLEOTIDE SEQUENCE [LARGE SCALE MRNA]</scope>
    <source>
        <strain>Hereford</strain>
        <tissue>Fetal cerebellum</tissue>
    </source>
</reference>
<name>TEFF2_BOVIN</name>
<evidence type="ECO:0000250" key="1">
    <source>
        <dbReference type="UniProtKB" id="Q9UIK5"/>
    </source>
</evidence>
<evidence type="ECO:0000255" key="2"/>
<evidence type="ECO:0000255" key="3">
    <source>
        <dbReference type="PROSITE-ProRule" id="PRU00076"/>
    </source>
</evidence>
<evidence type="ECO:0000255" key="4">
    <source>
        <dbReference type="PROSITE-ProRule" id="PRU00798"/>
    </source>
</evidence>
<evidence type="ECO:0000256" key="5">
    <source>
        <dbReference type="SAM" id="MobiDB-lite"/>
    </source>
</evidence>
<evidence type="ECO:0000305" key="6"/>
<dbReference type="EMBL" id="BC118420">
    <property type="protein sequence ID" value="AAI18421.1"/>
    <property type="molecule type" value="mRNA"/>
</dbReference>
<dbReference type="RefSeq" id="NP_001069569.1">
    <property type="nucleotide sequence ID" value="NM_001076101.2"/>
</dbReference>
<dbReference type="SMR" id="Q17QD6"/>
<dbReference type="FunCoup" id="Q17QD6">
    <property type="interactions" value="969"/>
</dbReference>
<dbReference type="STRING" id="9913.ENSBTAP00000019754"/>
<dbReference type="GlyCosmos" id="Q17QD6">
    <property type="glycosylation" value="1 site, No reported glycans"/>
</dbReference>
<dbReference type="GlyGen" id="Q17QD6">
    <property type="glycosylation" value="1 site"/>
</dbReference>
<dbReference type="PaxDb" id="9913-ENSBTAP00000019754"/>
<dbReference type="Ensembl" id="ENSBTAT00000019754.5">
    <property type="protein sequence ID" value="ENSBTAP00000019754.3"/>
    <property type="gene ID" value="ENSBTAG00000014832.5"/>
</dbReference>
<dbReference type="GeneID" id="538354"/>
<dbReference type="KEGG" id="bta:538354"/>
<dbReference type="CTD" id="23671"/>
<dbReference type="VEuPathDB" id="HostDB:ENSBTAG00000014832"/>
<dbReference type="VGNC" id="VGNC:35940">
    <property type="gene designation" value="TMEFF2"/>
</dbReference>
<dbReference type="eggNOG" id="KOG3649">
    <property type="taxonomic scope" value="Eukaryota"/>
</dbReference>
<dbReference type="GeneTree" id="ENSGT00940000156056"/>
<dbReference type="HOGENOM" id="CLU_048579_1_0_1"/>
<dbReference type="InParanoid" id="Q17QD6"/>
<dbReference type="OMA" id="HCQGQTL"/>
<dbReference type="OrthoDB" id="328123at2759"/>
<dbReference type="TreeFam" id="TF330868"/>
<dbReference type="Proteomes" id="UP000009136">
    <property type="component" value="Chromosome 2"/>
</dbReference>
<dbReference type="Bgee" id="ENSBTAG00000014832">
    <property type="expression patterns" value="Expressed in floor plate of diencephalon and 78 other cell types or tissues"/>
</dbReference>
<dbReference type="GO" id="GO:0005576">
    <property type="term" value="C:extracellular region"/>
    <property type="evidence" value="ECO:0000318"/>
    <property type="project" value="GO_Central"/>
</dbReference>
<dbReference type="GO" id="GO:0016020">
    <property type="term" value="C:membrane"/>
    <property type="evidence" value="ECO:0007669"/>
    <property type="project" value="UniProtKB-SubCell"/>
</dbReference>
<dbReference type="GO" id="GO:0030154">
    <property type="term" value="P:cell differentiation"/>
    <property type="evidence" value="ECO:0000318"/>
    <property type="project" value="GO_Central"/>
</dbReference>
<dbReference type="GO" id="GO:0030336">
    <property type="term" value="P:negative regulation of cell migration"/>
    <property type="evidence" value="ECO:0007669"/>
    <property type="project" value="Ensembl"/>
</dbReference>
<dbReference type="GO" id="GO:0045720">
    <property type="term" value="P:negative regulation of integrin biosynthetic process"/>
    <property type="evidence" value="ECO:0007669"/>
    <property type="project" value="Ensembl"/>
</dbReference>
<dbReference type="GO" id="GO:0051497">
    <property type="term" value="P:negative regulation of stress fiber assembly"/>
    <property type="evidence" value="ECO:0007669"/>
    <property type="project" value="Ensembl"/>
</dbReference>
<dbReference type="GO" id="GO:0044319">
    <property type="term" value="P:wound healing, spreading of cells"/>
    <property type="evidence" value="ECO:0007669"/>
    <property type="project" value="Ensembl"/>
</dbReference>
<dbReference type="CDD" id="cd00104">
    <property type="entry name" value="KAZAL_FS"/>
    <property type="match status" value="2"/>
</dbReference>
<dbReference type="FunFam" id="2.10.25.10:FF:000234">
    <property type="entry name" value="tomoregulin-2 isoform X1"/>
    <property type="match status" value="1"/>
</dbReference>
<dbReference type="FunFam" id="3.30.60.30:FF:000002">
    <property type="entry name" value="tomoregulin-2 isoform X1"/>
    <property type="match status" value="1"/>
</dbReference>
<dbReference type="FunFam" id="3.30.60.30:FF:000020">
    <property type="entry name" value="tomoregulin-2 isoform X2"/>
    <property type="match status" value="1"/>
</dbReference>
<dbReference type="Gene3D" id="3.30.60.30">
    <property type="match status" value="2"/>
</dbReference>
<dbReference type="Gene3D" id="2.10.25.10">
    <property type="entry name" value="Laminin"/>
    <property type="match status" value="1"/>
</dbReference>
<dbReference type="InterPro" id="IPR000742">
    <property type="entry name" value="EGF-like_dom"/>
</dbReference>
<dbReference type="InterPro" id="IPR002350">
    <property type="entry name" value="Kazal_dom"/>
</dbReference>
<dbReference type="InterPro" id="IPR036058">
    <property type="entry name" value="Kazal_dom_sf"/>
</dbReference>
<dbReference type="PANTHER" id="PTHR21632">
    <property type="entry name" value="REGULATORY PROTEIN ZESTE"/>
    <property type="match status" value="1"/>
</dbReference>
<dbReference type="PANTHER" id="PTHR21632:SF5">
    <property type="entry name" value="TOMOREGULIN-2 ISOFORM X1"/>
    <property type="match status" value="1"/>
</dbReference>
<dbReference type="Pfam" id="PF07648">
    <property type="entry name" value="Kazal_2"/>
    <property type="match status" value="2"/>
</dbReference>
<dbReference type="SMART" id="SM00280">
    <property type="entry name" value="KAZAL"/>
    <property type="match status" value="2"/>
</dbReference>
<dbReference type="SUPFAM" id="SSF57196">
    <property type="entry name" value="EGF/Laminin"/>
    <property type="match status" value="1"/>
</dbReference>
<dbReference type="SUPFAM" id="SSF100895">
    <property type="entry name" value="Kazal-type serine protease inhibitors"/>
    <property type="match status" value="2"/>
</dbReference>
<dbReference type="PROSITE" id="PS00022">
    <property type="entry name" value="EGF_1"/>
    <property type="match status" value="1"/>
</dbReference>
<dbReference type="PROSITE" id="PS01186">
    <property type="entry name" value="EGF_2"/>
    <property type="match status" value="1"/>
</dbReference>
<dbReference type="PROSITE" id="PS50026">
    <property type="entry name" value="EGF_3"/>
    <property type="match status" value="1"/>
</dbReference>
<dbReference type="PROSITE" id="PS51465">
    <property type="entry name" value="KAZAL_2"/>
    <property type="match status" value="2"/>
</dbReference>
<organism>
    <name type="scientific">Bos taurus</name>
    <name type="common">Bovine</name>
    <dbReference type="NCBI Taxonomy" id="9913"/>
    <lineage>
        <taxon>Eukaryota</taxon>
        <taxon>Metazoa</taxon>
        <taxon>Chordata</taxon>
        <taxon>Craniata</taxon>
        <taxon>Vertebrata</taxon>
        <taxon>Euteleostomi</taxon>
        <taxon>Mammalia</taxon>
        <taxon>Eutheria</taxon>
        <taxon>Laurasiatheria</taxon>
        <taxon>Artiodactyla</taxon>
        <taxon>Ruminantia</taxon>
        <taxon>Pecora</taxon>
        <taxon>Bovidae</taxon>
        <taxon>Bovinae</taxon>
        <taxon>Bos</taxon>
    </lineage>
</organism>
<keyword id="KW-1015">Disulfide bond</keyword>
<keyword id="KW-0245">EGF-like domain</keyword>
<keyword id="KW-0325">Glycoprotein</keyword>
<keyword id="KW-0472">Membrane</keyword>
<keyword id="KW-0654">Proteoglycan</keyword>
<keyword id="KW-1185">Reference proteome</keyword>
<keyword id="KW-0677">Repeat</keyword>
<keyword id="KW-0732">Signal</keyword>
<keyword id="KW-0812">Transmembrane</keyword>
<keyword id="KW-1133">Transmembrane helix</keyword>
<comment type="function">
    <text evidence="1">May be a survival factor for hippocampal and mesencephalic neurons. The shedded form may up-regulate cell proliferation (By similarity).</text>
</comment>
<comment type="subcellular location">
    <subcellularLocation>
        <location evidence="6">Membrane</location>
        <topology evidence="6">Single-pass type I membrane protein</topology>
    </subcellularLocation>
</comment>
<comment type="PTM">
    <text evidence="1">O-glycosylated; contains chondroitin sulfate glycosaminoglycans.</text>
</comment>
<comment type="PTM">
    <text evidence="1">A soluble form (TMEFF2-ECD) is produced by proteolytic shedding. This shedding can be induced by phorbol ester or pro-inflammatory cytokines such as TNFalpha, and is mediated by a metalloproteinase ADAM (By similarity).</text>
</comment>
<comment type="similarity">
    <text evidence="6">Belongs to the tomoregulin family.</text>
</comment>
<feature type="signal peptide" evidence="2">
    <location>
        <begin position="1"/>
        <end position="39"/>
    </location>
</feature>
<feature type="chain" id="PRO_0000286060" description="Tomoregulin-2">
    <location>
        <begin position="40"/>
        <end position="374"/>
    </location>
</feature>
<feature type="topological domain" description="Extracellular" evidence="2">
    <location>
        <begin position="40"/>
        <end position="320"/>
    </location>
</feature>
<feature type="transmembrane region" description="Helical" evidence="2">
    <location>
        <begin position="321"/>
        <end position="341"/>
    </location>
</feature>
<feature type="topological domain" description="Cytoplasmic" evidence="2">
    <location>
        <begin position="342"/>
        <end position="374"/>
    </location>
</feature>
<feature type="domain" description="Kazal-like 1" evidence="4">
    <location>
        <begin position="90"/>
        <end position="137"/>
    </location>
</feature>
<feature type="domain" description="Kazal-like 2" evidence="4">
    <location>
        <begin position="181"/>
        <end position="229"/>
    </location>
</feature>
<feature type="domain" description="EGF-like" evidence="3">
    <location>
        <begin position="261"/>
        <end position="301"/>
    </location>
</feature>
<feature type="region of interest" description="Required for shedding" evidence="1">
    <location>
        <begin position="303"/>
        <end position="320"/>
    </location>
</feature>
<feature type="region of interest" description="Disordered" evidence="5">
    <location>
        <begin position="353"/>
        <end position="374"/>
    </location>
</feature>
<feature type="compositionally biased region" description="Polar residues" evidence="5">
    <location>
        <begin position="356"/>
        <end position="374"/>
    </location>
</feature>
<feature type="site" description="Reactive bond" evidence="4">
    <location>
        <begin position="97"/>
        <end position="98"/>
    </location>
</feature>
<feature type="site" description="Reactive bond" evidence="4">
    <location>
        <begin position="188"/>
        <end position="189"/>
    </location>
</feature>
<feature type="glycosylation site" description="N-linked (GlcNAc...) asparagine" evidence="2">
    <location>
        <position position="55"/>
    </location>
</feature>
<feature type="disulfide bond" evidence="4">
    <location>
        <begin position="91"/>
        <end position="121"/>
    </location>
</feature>
<feature type="disulfide bond" evidence="4">
    <location>
        <begin position="95"/>
        <end position="114"/>
    </location>
</feature>
<feature type="disulfide bond" evidence="4">
    <location>
        <begin position="103"/>
        <end position="135"/>
    </location>
</feature>
<feature type="disulfide bond" evidence="4">
    <location>
        <begin position="182"/>
        <end position="213"/>
    </location>
</feature>
<feature type="disulfide bond" evidence="4">
    <location>
        <begin position="186"/>
        <end position="206"/>
    </location>
</feature>
<feature type="disulfide bond" evidence="4">
    <location>
        <begin position="195"/>
        <end position="227"/>
    </location>
</feature>
<feature type="disulfide bond" evidence="3">
    <location>
        <begin position="265"/>
        <end position="278"/>
    </location>
</feature>
<feature type="disulfide bond" evidence="3">
    <location>
        <begin position="273"/>
        <end position="289"/>
    </location>
</feature>
<feature type="disulfide bond" evidence="3">
    <location>
        <begin position="291"/>
        <end position="300"/>
    </location>
</feature>
<gene>
    <name type="primary">TMEFF2</name>
</gene>